<dbReference type="EMBL" id="CP000393">
    <property type="protein sequence ID" value="ABG52152.1"/>
    <property type="molecule type" value="Genomic_DNA"/>
</dbReference>
<dbReference type="RefSeq" id="WP_011612507.1">
    <property type="nucleotide sequence ID" value="NC_008312.1"/>
</dbReference>
<dbReference type="SMR" id="Q110C2"/>
<dbReference type="STRING" id="203124.Tery_2997"/>
<dbReference type="KEGG" id="ter:Tery_2997"/>
<dbReference type="eggNOG" id="COG0256">
    <property type="taxonomic scope" value="Bacteria"/>
</dbReference>
<dbReference type="HOGENOM" id="CLU_098841_0_1_3"/>
<dbReference type="OrthoDB" id="9810939at2"/>
<dbReference type="GO" id="GO:0022625">
    <property type="term" value="C:cytosolic large ribosomal subunit"/>
    <property type="evidence" value="ECO:0007669"/>
    <property type="project" value="TreeGrafter"/>
</dbReference>
<dbReference type="GO" id="GO:0008097">
    <property type="term" value="F:5S rRNA binding"/>
    <property type="evidence" value="ECO:0007669"/>
    <property type="project" value="TreeGrafter"/>
</dbReference>
<dbReference type="GO" id="GO:0003735">
    <property type="term" value="F:structural constituent of ribosome"/>
    <property type="evidence" value="ECO:0007669"/>
    <property type="project" value="InterPro"/>
</dbReference>
<dbReference type="GO" id="GO:0006412">
    <property type="term" value="P:translation"/>
    <property type="evidence" value="ECO:0007669"/>
    <property type="project" value="UniProtKB-UniRule"/>
</dbReference>
<dbReference type="CDD" id="cd00432">
    <property type="entry name" value="Ribosomal_L18_L5e"/>
    <property type="match status" value="1"/>
</dbReference>
<dbReference type="FunFam" id="3.30.420.100:FF:000001">
    <property type="entry name" value="50S ribosomal protein L18"/>
    <property type="match status" value="1"/>
</dbReference>
<dbReference type="Gene3D" id="3.30.420.100">
    <property type="match status" value="1"/>
</dbReference>
<dbReference type="HAMAP" id="MF_01337_B">
    <property type="entry name" value="Ribosomal_uL18_B"/>
    <property type="match status" value="1"/>
</dbReference>
<dbReference type="InterPro" id="IPR004389">
    <property type="entry name" value="Ribosomal_uL18_bac-type"/>
</dbReference>
<dbReference type="InterPro" id="IPR005484">
    <property type="entry name" value="Ribosomal_uL18_bac/euk"/>
</dbReference>
<dbReference type="NCBIfam" id="TIGR00060">
    <property type="entry name" value="L18_bact"/>
    <property type="match status" value="1"/>
</dbReference>
<dbReference type="PANTHER" id="PTHR12899">
    <property type="entry name" value="39S RIBOSOMAL PROTEIN L18, MITOCHONDRIAL"/>
    <property type="match status" value="1"/>
</dbReference>
<dbReference type="PANTHER" id="PTHR12899:SF3">
    <property type="entry name" value="LARGE RIBOSOMAL SUBUNIT PROTEIN UL18M"/>
    <property type="match status" value="1"/>
</dbReference>
<dbReference type="Pfam" id="PF00861">
    <property type="entry name" value="Ribosomal_L18p"/>
    <property type="match status" value="1"/>
</dbReference>
<dbReference type="SUPFAM" id="SSF53137">
    <property type="entry name" value="Translational machinery components"/>
    <property type="match status" value="1"/>
</dbReference>
<gene>
    <name evidence="1" type="primary">rplR</name>
    <name evidence="1" type="synonym">rpl18</name>
    <name type="ordered locus">Tery_2997</name>
</gene>
<comment type="function">
    <text evidence="1">This is one of the proteins that bind and probably mediate the attachment of the 5S RNA into the large ribosomal subunit, where it forms part of the central protuberance.</text>
</comment>
<comment type="subunit">
    <text evidence="1">Part of the 50S ribosomal subunit; part of the 5S rRNA/L5/L18/L25 subcomplex. Contacts the 5S and 23S rRNAs.</text>
</comment>
<comment type="similarity">
    <text evidence="1">Belongs to the universal ribosomal protein uL18 family.</text>
</comment>
<accession>Q110C2</accession>
<proteinExistence type="inferred from homology"/>
<name>RL18_TRIEI</name>
<sequence>MKYTRKDSIIKRHRRVRKKVFGTSERPRLSVFRSNMHIYAQVIDDTKQHTLVAASTLEAEVKSTIKSGANCDASIQIGKLIAQRSLEKGIEKVVFDRGGNLYHGRVKALAEAAREAGLDF</sequence>
<feature type="chain" id="PRO_1000053134" description="Large ribosomal subunit protein uL18">
    <location>
        <begin position="1"/>
        <end position="120"/>
    </location>
</feature>
<reference key="1">
    <citation type="journal article" date="2015" name="Proc. Natl. Acad. Sci. U.S.A.">
        <title>Trichodesmium genome maintains abundant, widespread noncoding DNA in situ, despite oligotrophic lifestyle.</title>
        <authorList>
            <person name="Walworth N."/>
            <person name="Pfreundt U."/>
            <person name="Nelson W.C."/>
            <person name="Mincer T."/>
            <person name="Heidelberg J.F."/>
            <person name="Fu F."/>
            <person name="Waterbury J.B."/>
            <person name="Glavina del Rio T."/>
            <person name="Goodwin L."/>
            <person name="Kyrpides N.C."/>
            <person name="Land M.L."/>
            <person name="Woyke T."/>
            <person name="Hutchins D.A."/>
            <person name="Hess W.R."/>
            <person name="Webb E.A."/>
        </authorList>
    </citation>
    <scope>NUCLEOTIDE SEQUENCE [LARGE SCALE GENOMIC DNA]</scope>
    <source>
        <strain>IMS101</strain>
    </source>
</reference>
<evidence type="ECO:0000255" key="1">
    <source>
        <dbReference type="HAMAP-Rule" id="MF_01337"/>
    </source>
</evidence>
<evidence type="ECO:0000305" key="2"/>
<protein>
    <recommendedName>
        <fullName evidence="1">Large ribosomal subunit protein uL18</fullName>
    </recommendedName>
    <alternativeName>
        <fullName evidence="2">50S ribosomal protein L18</fullName>
    </alternativeName>
</protein>
<organism>
    <name type="scientific">Trichodesmium erythraeum (strain IMS101)</name>
    <dbReference type="NCBI Taxonomy" id="203124"/>
    <lineage>
        <taxon>Bacteria</taxon>
        <taxon>Bacillati</taxon>
        <taxon>Cyanobacteriota</taxon>
        <taxon>Cyanophyceae</taxon>
        <taxon>Oscillatoriophycideae</taxon>
        <taxon>Oscillatoriales</taxon>
        <taxon>Microcoleaceae</taxon>
        <taxon>Trichodesmium</taxon>
    </lineage>
</organism>
<keyword id="KW-0687">Ribonucleoprotein</keyword>
<keyword id="KW-0689">Ribosomal protein</keyword>
<keyword id="KW-0694">RNA-binding</keyword>
<keyword id="KW-0699">rRNA-binding</keyword>